<sequence>MTELINSEPTLFLFPNKEDSKQLVEKAIEVFSNIKIPSTSPIQTIVTKGLDNWQIYNQLALAAKYALDDLPQVDVENEDEEEDSITSFQDEDDETSHQELSDNSEMNNRDDADDEFLGFSGPENLEDVDESSAEDVSGDEAEIMNEEGQQIEQKKDAFGLNDGFFDIDNFNKQTLALEEEAVEEGVLGDEDDGIDLLMDPDENMEDSEDESNGPQADSIMYEDFFGPKTAAGRRELKKKKAESKRKRTSKPDFKNDVQQNVIEENNESSDNEYATFDRVKKDLFASDEEDDVSADQLSSYERDKARLTQQIRELEAENVAKKSWTMMGEATSKGRPSNSLLDVDLEFETGAKPVPVQTEETTETLEDLIKNRIISKTFDDVPKRAPVAVTEFRPSELFELNENKSQRSLAEEYEEEFLKKSNADTYKSEADKKKEKEHEEIKALFSEVSRTLDSLASWHYVPPPPESTVEIVSNAPTLAMEDVQPTAASDTMALAPQEVYKPSNENREGETITRSGIAISSTEMDHQQKQARRRRVRRKHAEKRKQMAEKRRNSGTEQVVRQLSKSNVEVIGKGGERKKVASNSNKYHPIVSSNQLKL</sequence>
<dbReference type="EMBL" id="CU329670">
    <property type="protein sequence ID" value="CAB11156.1"/>
    <property type="molecule type" value="Genomic_DNA"/>
</dbReference>
<dbReference type="PIR" id="T38241">
    <property type="entry name" value="T38241"/>
</dbReference>
<dbReference type="RefSeq" id="NP_593634.1">
    <property type="nucleotide sequence ID" value="NM_001019065.2"/>
</dbReference>
<dbReference type="SMR" id="O13910"/>
<dbReference type="BioGRID" id="278520">
    <property type="interactions" value="6"/>
</dbReference>
<dbReference type="FunCoup" id="O13910">
    <property type="interactions" value="568"/>
</dbReference>
<dbReference type="STRING" id="284812.O13910"/>
<dbReference type="iPTMnet" id="O13910"/>
<dbReference type="PaxDb" id="4896-SPAC23C11.03.1"/>
<dbReference type="EnsemblFungi" id="SPAC23C11.03.1">
    <property type="protein sequence ID" value="SPAC23C11.03.1:pep"/>
    <property type="gene ID" value="SPAC23C11.03"/>
</dbReference>
<dbReference type="GeneID" id="2542038"/>
<dbReference type="KEGG" id="spo:2542038"/>
<dbReference type="PomBase" id="SPAC23C11.03">
    <property type="gene designation" value="mpp10"/>
</dbReference>
<dbReference type="VEuPathDB" id="FungiDB:SPAC23C11.03"/>
<dbReference type="eggNOG" id="KOG2600">
    <property type="taxonomic scope" value="Eukaryota"/>
</dbReference>
<dbReference type="HOGENOM" id="CLU_011271_1_0_1"/>
<dbReference type="InParanoid" id="O13910"/>
<dbReference type="OMA" id="HFAEDFG"/>
<dbReference type="PhylomeDB" id="O13910"/>
<dbReference type="Reactome" id="R-SPO-6791226">
    <property type="pathway name" value="Major pathway of rRNA processing in the nucleolus and cytosol"/>
</dbReference>
<dbReference type="PRO" id="PR:O13910"/>
<dbReference type="Proteomes" id="UP000002485">
    <property type="component" value="Chromosome I"/>
</dbReference>
<dbReference type="GO" id="GO:0005829">
    <property type="term" value="C:cytosol"/>
    <property type="evidence" value="ECO:0007005"/>
    <property type="project" value="PomBase"/>
</dbReference>
<dbReference type="GO" id="GO:0034457">
    <property type="term" value="C:Mpp10 complex"/>
    <property type="evidence" value="ECO:0000318"/>
    <property type="project" value="GO_Central"/>
</dbReference>
<dbReference type="GO" id="GO:0005730">
    <property type="term" value="C:nucleolus"/>
    <property type="evidence" value="ECO:0007005"/>
    <property type="project" value="PomBase"/>
</dbReference>
<dbReference type="GO" id="GO:0005634">
    <property type="term" value="C:nucleus"/>
    <property type="evidence" value="ECO:0007005"/>
    <property type="project" value="PomBase"/>
</dbReference>
<dbReference type="GO" id="GO:0030532">
    <property type="term" value="C:small nuclear ribonucleoprotein complex"/>
    <property type="evidence" value="ECO:0000266"/>
    <property type="project" value="PomBase"/>
</dbReference>
<dbReference type="GO" id="GO:0032040">
    <property type="term" value="C:small-subunit processome"/>
    <property type="evidence" value="ECO:0000318"/>
    <property type="project" value="GO_Central"/>
</dbReference>
<dbReference type="GO" id="GO:0005732">
    <property type="term" value="C:sno(s)RNA-containing ribonucleoprotein complex"/>
    <property type="evidence" value="ECO:0000266"/>
    <property type="project" value="PomBase"/>
</dbReference>
<dbReference type="GO" id="GO:0030490">
    <property type="term" value="P:maturation of SSU-rRNA"/>
    <property type="evidence" value="ECO:0000266"/>
    <property type="project" value="PomBase"/>
</dbReference>
<dbReference type="InterPro" id="IPR012173">
    <property type="entry name" value="Mpp10"/>
</dbReference>
<dbReference type="PANTHER" id="PTHR17039">
    <property type="entry name" value="U3 SMALL NUCLEOLAR RIBONUCLEOPROTEIN PROTEIN MPP10"/>
    <property type="match status" value="1"/>
</dbReference>
<dbReference type="PANTHER" id="PTHR17039:SF0">
    <property type="entry name" value="U3 SMALL NUCLEOLAR RIBONUCLEOPROTEIN PROTEIN MPP10"/>
    <property type="match status" value="1"/>
</dbReference>
<dbReference type="Pfam" id="PF04006">
    <property type="entry name" value="Mpp10"/>
    <property type="match status" value="1"/>
</dbReference>
<dbReference type="PIRSF" id="PIRSF017300">
    <property type="entry name" value="snoRNP_Mpp10"/>
    <property type="match status" value="1"/>
</dbReference>
<comment type="function">
    <text evidence="1">Component of the U3 small nucleolar ribonucleoprotein. Required for the early cleavages at sites A0, A1 and A2 during 18S ribosomal pre-RNA processing (By similarity).</text>
</comment>
<comment type="subunit">
    <text evidence="1">Component of a heterotrimeric complex containing imp3, imp4 and mpp10.</text>
</comment>
<comment type="subcellular location">
    <subcellularLocation>
        <location evidence="1">Nucleus</location>
        <location evidence="1">Nucleolus</location>
    </subcellularLocation>
</comment>
<comment type="similarity">
    <text evidence="4">Belongs to the MPP10 family.</text>
</comment>
<name>MPP10_SCHPO</name>
<organism>
    <name type="scientific">Schizosaccharomyces pombe (strain 972 / ATCC 24843)</name>
    <name type="common">Fission yeast</name>
    <dbReference type="NCBI Taxonomy" id="284812"/>
    <lineage>
        <taxon>Eukaryota</taxon>
        <taxon>Fungi</taxon>
        <taxon>Dikarya</taxon>
        <taxon>Ascomycota</taxon>
        <taxon>Taphrinomycotina</taxon>
        <taxon>Schizosaccharomycetes</taxon>
        <taxon>Schizosaccharomycetales</taxon>
        <taxon>Schizosaccharomycetaceae</taxon>
        <taxon>Schizosaccharomyces</taxon>
    </lineage>
</organism>
<accession>O13910</accession>
<feature type="chain" id="PRO_0000121533" description="U3 small nucleolar ribonucleoprotein protein mpp10">
    <location>
        <begin position="1"/>
        <end position="598"/>
    </location>
</feature>
<feature type="region of interest" description="Disordered" evidence="2">
    <location>
        <begin position="76"/>
        <end position="151"/>
    </location>
</feature>
<feature type="region of interest" description="Disordered" evidence="2">
    <location>
        <begin position="183"/>
        <end position="274"/>
    </location>
</feature>
<feature type="region of interest" description="Disordered" evidence="2">
    <location>
        <begin position="284"/>
        <end position="303"/>
    </location>
</feature>
<feature type="region of interest" description="Disordered" evidence="2">
    <location>
        <begin position="499"/>
        <end position="598"/>
    </location>
</feature>
<feature type="compositionally biased region" description="Acidic residues" evidence="2">
    <location>
        <begin position="76"/>
        <end position="94"/>
    </location>
</feature>
<feature type="compositionally biased region" description="Acidic residues" evidence="2">
    <location>
        <begin position="124"/>
        <end position="145"/>
    </location>
</feature>
<feature type="compositionally biased region" description="Acidic residues" evidence="2">
    <location>
        <begin position="183"/>
        <end position="211"/>
    </location>
</feature>
<feature type="compositionally biased region" description="Basic residues" evidence="2">
    <location>
        <begin position="235"/>
        <end position="248"/>
    </location>
</feature>
<feature type="compositionally biased region" description="Polar residues" evidence="2">
    <location>
        <begin position="512"/>
        <end position="522"/>
    </location>
</feature>
<feature type="compositionally biased region" description="Basic residues" evidence="2">
    <location>
        <begin position="529"/>
        <end position="543"/>
    </location>
</feature>
<feature type="compositionally biased region" description="Basic and acidic residues" evidence="2">
    <location>
        <begin position="544"/>
        <end position="554"/>
    </location>
</feature>
<feature type="compositionally biased region" description="Polar residues" evidence="2">
    <location>
        <begin position="555"/>
        <end position="567"/>
    </location>
</feature>
<feature type="compositionally biased region" description="Polar residues" evidence="2">
    <location>
        <begin position="581"/>
        <end position="598"/>
    </location>
</feature>
<feature type="modified residue" description="Phosphoserine" evidence="3">
    <location>
        <position position="268"/>
    </location>
</feature>
<feature type="modified residue" description="Phosphoserine" evidence="3">
    <location>
        <position position="269"/>
    </location>
</feature>
<feature type="modified residue" description="Phosphoserine" evidence="3">
    <location>
        <position position="286"/>
    </location>
</feature>
<feature type="modified residue" description="Phosphoserine" evidence="3">
    <location>
        <position position="293"/>
    </location>
</feature>
<reference key="1">
    <citation type="journal article" date="2002" name="Nature">
        <title>The genome sequence of Schizosaccharomyces pombe.</title>
        <authorList>
            <person name="Wood V."/>
            <person name="Gwilliam R."/>
            <person name="Rajandream M.A."/>
            <person name="Lyne M.H."/>
            <person name="Lyne R."/>
            <person name="Stewart A."/>
            <person name="Sgouros J.G."/>
            <person name="Peat N."/>
            <person name="Hayles J."/>
            <person name="Baker S.G."/>
            <person name="Basham D."/>
            <person name="Bowman S."/>
            <person name="Brooks K."/>
            <person name="Brown D."/>
            <person name="Brown S."/>
            <person name="Chillingworth T."/>
            <person name="Churcher C.M."/>
            <person name="Collins M."/>
            <person name="Connor R."/>
            <person name="Cronin A."/>
            <person name="Davis P."/>
            <person name="Feltwell T."/>
            <person name="Fraser A."/>
            <person name="Gentles S."/>
            <person name="Goble A."/>
            <person name="Hamlin N."/>
            <person name="Harris D.E."/>
            <person name="Hidalgo J."/>
            <person name="Hodgson G."/>
            <person name="Holroyd S."/>
            <person name="Hornsby T."/>
            <person name="Howarth S."/>
            <person name="Huckle E.J."/>
            <person name="Hunt S."/>
            <person name="Jagels K."/>
            <person name="James K.D."/>
            <person name="Jones L."/>
            <person name="Jones M."/>
            <person name="Leather S."/>
            <person name="McDonald S."/>
            <person name="McLean J."/>
            <person name="Mooney P."/>
            <person name="Moule S."/>
            <person name="Mungall K.L."/>
            <person name="Murphy L.D."/>
            <person name="Niblett D."/>
            <person name="Odell C."/>
            <person name="Oliver K."/>
            <person name="O'Neil S."/>
            <person name="Pearson D."/>
            <person name="Quail M.A."/>
            <person name="Rabbinowitsch E."/>
            <person name="Rutherford K.M."/>
            <person name="Rutter S."/>
            <person name="Saunders D."/>
            <person name="Seeger K."/>
            <person name="Sharp S."/>
            <person name="Skelton J."/>
            <person name="Simmonds M.N."/>
            <person name="Squares R."/>
            <person name="Squares S."/>
            <person name="Stevens K."/>
            <person name="Taylor K."/>
            <person name="Taylor R.G."/>
            <person name="Tivey A."/>
            <person name="Walsh S.V."/>
            <person name="Warren T."/>
            <person name="Whitehead S."/>
            <person name="Woodward J.R."/>
            <person name="Volckaert G."/>
            <person name="Aert R."/>
            <person name="Robben J."/>
            <person name="Grymonprez B."/>
            <person name="Weltjens I."/>
            <person name="Vanstreels E."/>
            <person name="Rieger M."/>
            <person name="Schaefer M."/>
            <person name="Mueller-Auer S."/>
            <person name="Gabel C."/>
            <person name="Fuchs M."/>
            <person name="Duesterhoeft A."/>
            <person name="Fritzc C."/>
            <person name="Holzer E."/>
            <person name="Moestl D."/>
            <person name="Hilbert H."/>
            <person name="Borzym K."/>
            <person name="Langer I."/>
            <person name="Beck A."/>
            <person name="Lehrach H."/>
            <person name="Reinhardt R."/>
            <person name="Pohl T.M."/>
            <person name="Eger P."/>
            <person name="Zimmermann W."/>
            <person name="Wedler H."/>
            <person name="Wambutt R."/>
            <person name="Purnelle B."/>
            <person name="Goffeau A."/>
            <person name="Cadieu E."/>
            <person name="Dreano S."/>
            <person name="Gloux S."/>
            <person name="Lelaure V."/>
            <person name="Mottier S."/>
            <person name="Galibert F."/>
            <person name="Aves S.J."/>
            <person name="Xiang Z."/>
            <person name="Hunt C."/>
            <person name="Moore K."/>
            <person name="Hurst S.M."/>
            <person name="Lucas M."/>
            <person name="Rochet M."/>
            <person name="Gaillardin C."/>
            <person name="Tallada V.A."/>
            <person name="Garzon A."/>
            <person name="Thode G."/>
            <person name="Daga R.R."/>
            <person name="Cruzado L."/>
            <person name="Jimenez J."/>
            <person name="Sanchez M."/>
            <person name="del Rey F."/>
            <person name="Benito J."/>
            <person name="Dominguez A."/>
            <person name="Revuelta J.L."/>
            <person name="Moreno S."/>
            <person name="Armstrong J."/>
            <person name="Forsburg S.L."/>
            <person name="Cerutti L."/>
            <person name="Lowe T."/>
            <person name="McCombie W.R."/>
            <person name="Paulsen I."/>
            <person name="Potashkin J."/>
            <person name="Shpakovski G.V."/>
            <person name="Ussery D."/>
            <person name="Barrell B.G."/>
            <person name="Nurse P."/>
        </authorList>
    </citation>
    <scope>NUCLEOTIDE SEQUENCE [LARGE SCALE GENOMIC DNA]</scope>
    <source>
        <strain>972 / ATCC 24843</strain>
    </source>
</reference>
<reference key="2">
    <citation type="journal article" date="2008" name="J. Proteome Res.">
        <title>Phosphoproteome analysis of fission yeast.</title>
        <authorList>
            <person name="Wilson-Grady J.T."/>
            <person name="Villen J."/>
            <person name="Gygi S.P."/>
        </authorList>
    </citation>
    <scope>PHOSPHORYLATION [LARGE SCALE ANALYSIS] AT SER-268; SER-269; SER-286 AND SER-293</scope>
    <scope>IDENTIFICATION BY MASS SPECTROMETRY</scope>
</reference>
<protein>
    <recommendedName>
        <fullName>U3 small nucleolar ribonucleoprotein protein mpp10</fullName>
    </recommendedName>
</protein>
<gene>
    <name type="primary">mpp10</name>
    <name type="ORF">SPAC23C11.03</name>
</gene>
<evidence type="ECO:0000250" key="1"/>
<evidence type="ECO:0000256" key="2">
    <source>
        <dbReference type="SAM" id="MobiDB-lite"/>
    </source>
</evidence>
<evidence type="ECO:0000269" key="3">
    <source>
    </source>
</evidence>
<evidence type="ECO:0000305" key="4"/>
<keyword id="KW-0539">Nucleus</keyword>
<keyword id="KW-0597">Phosphoprotein</keyword>
<keyword id="KW-1185">Reference proteome</keyword>
<keyword id="KW-0687">Ribonucleoprotein</keyword>
<keyword id="KW-0690">Ribosome biogenesis</keyword>
<keyword id="KW-0698">rRNA processing</keyword>
<proteinExistence type="evidence at protein level"/>